<protein>
    <recommendedName>
        <fullName evidence="2">ATP-dependent protease subunit HslV</fullName>
        <ecNumber evidence="2">3.4.25.2</ecNumber>
    </recommendedName>
    <alternativeName>
        <fullName evidence="2">Heat shock protein HslV</fullName>
    </alternativeName>
</protein>
<proteinExistence type="inferred from homology"/>
<dbReference type="EC" id="3.4.25.2" evidence="2"/>
<dbReference type="EMBL" id="AE005674">
    <property type="protein sequence ID" value="AAN45443.1"/>
    <property type="molecule type" value="Genomic_DNA"/>
</dbReference>
<dbReference type="EMBL" id="AE014073">
    <property type="protein sequence ID" value="AAP18757.1"/>
    <property type="molecule type" value="Genomic_DNA"/>
</dbReference>
<dbReference type="RefSeq" id="NP_709736.1">
    <property type="nucleotide sequence ID" value="NC_004337.2"/>
</dbReference>
<dbReference type="RefSeq" id="WP_000208242.1">
    <property type="nucleotide sequence ID" value="NZ_WPGW01000012.1"/>
</dbReference>
<dbReference type="SMR" id="P0A7C1"/>
<dbReference type="STRING" id="198214.SF4010"/>
<dbReference type="MEROPS" id="T01.006"/>
<dbReference type="PaxDb" id="198214-SF4010"/>
<dbReference type="GeneID" id="1026583"/>
<dbReference type="GeneID" id="93777966"/>
<dbReference type="KEGG" id="sfl:SF4010"/>
<dbReference type="KEGG" id="sfx:S3737"/>
<dbReference type="PATRIC" id="fig|198214.7.peg.4725"/>
<dbReference type="HOGENOM" id="CLU_093872_1_0_6"/>
<dbReference type="BRENDA" id="3.4.25.2">
    <property type="organism ID" value="5712"/>
</dbReference>
<dbReference type="Proteomes" id="UP000001006">
    <property type="component" value="Chromosome"/>
</dbReference>
<dbReference type="Proteomes" id="UP000002673">
    <property type="component" value="Chromosome"/>
</dbReference>
<dbReference type="GO" id="GO:0009376">
    <property type="term" value="C:HslUV protease complex"/>
    <property type="evidence" value="ECO:0007669"/>
    <property type="project" value="UniProtKB-UniRule"/>
</dbReference>
<dbReference type="GO" id="GO:0005839">
    <property type="term" value="C:proteasome core complex"/>
    <property type="evidence" value="ECO:0007669"/>
    <property type="project" value="InterPro"/>
</dbReference>
<dbReference type="GO" id="GO:0046872">
    <property type="term" value="F:metal ion binding"/>
    <property type="evidence" value="ECO:0007669"/>
    <property type="project" value="UniProtKB-KW"/>
</dbReference>
<dbReference type="GO" id="GO:0004298">
    <property type="term" value="F:threonine-type endopeptidase activity"/>
    <property type="evidence" value="ECO:0007669"/>
    <property type="project" value="UniProtKB-KW"/>
</dbReference>
<dbReference type="GO" id="GO:0051603">
    <property type="term" value="P:proteolysis involved in protein catabolic process"/>
    <property type="evidence" value="ECO:0007669"/>
    <property type="project" value="InterPro"/>
</dbReference>
<dbReference type="CDD" id="cd01913">
    <property type="entry name" value="protease_HslV"/>
    <property type="match status" value="1"/>
</dbReference>
<dbReference type="FunFam" id="3.60.20.10:FF:000002">
    <property type="entry name" value="ATP-dependent protease subunit HslV"/>
    <property type="match status" value="1"/>
</dbReference>
<dbReference type="Gene3D" id="3.60.20.10">
    <property type="entry name" value="Glutamine Phosphoribosylpyrophosphate, subunit 1, domain 1"/>
    <property type="match status" value="1"/>
</dbReference>
<dbReference type="HAMAP" id="MF_00248">
    <property type="entry name" value="HslV"/>
    <property type="match status" value="1"/>
</dbReference>
<dbReference type="InterPro" id="IPR022281">
    <property type="entry name" value="ATP-dep_Prtase_HsIV_su"/>
</dbReference>
<dbReference type="InterPro" id="IPR029055">
    <property type="entry name" value="Ntn_hydrolases_N"/>
</dbReference>
<dbReference type="InterPro" id="IPR001353">
    <property type="entry name" value="Proteasome_sua/b"/>
</dbReference>
<dbReference type="InterPro" id="IPR023333">
    <property type="entry name" value="Proteasome_suB-type"/>
</dbReference>
<dbReference type="NCBIfam" id="TIGR03692">
    <property type="entry name" value="ATP_dep_HslV"/>
    <property type="match status" value="1"/>
</dbReference>
<dbReference type="NCBIfam" id="NF003964">
    <property type="entry name" value="PRK05456.1"/>
    <property type="match status" value="1"/>
</dbReference>
<dbReference type="PANTHER" id="PTHR32194:SF0">
    <property type="entry name" value="ATP-DEPENDENT PROTEASE SUBUNIT HSLV"/>
    <property type="match status" value="1"/>
</dbReference>
<dbReference type="PANTHER" id="PTHR32194">
    <property type="entry name" value="METALLOPROTEASE TLDD"/>
    <property type="match status" value="1"/>
</dbReference>
<dbReference type="Pfam" id="PF00227">
    <property type="entry name" value="Proteasome"/>
    <property type="match status" value="1"/>
</dbReference>
<dbReference type="PIRSF" id="PIRSF039093">
    <property type="entry name" value="HslV"/>
    <property type="match status" value="1"/>
</dbReference>
<dbReference type="SUPFAM" id="SSF56235">
    <property type="entry name" value="N-terminal nucleophile aminohydrolases (Ntn hydrolases)"/>
    <property type="match status" value="1"/>
</dbReference>
<dbReference type="PROSITE" id="PS51476">
    <property type="entry name" value="PROTEASOME_BETA_2"/>
    <property type="match status" value="1"/>
</dbReference>
<evidence type="ECO:0000250" key="1"/>
<evidence type="ECO:0000255" key="2">
    <source>
        <dbReference type="HAMAP-Rule" id="MF_00248"/>
    </source>
</evidence>
<comment type="function">
    <text evidence="2">Protease subunit of a proteasome-like degradation complex believed to be a general protein degrading machinery.</text>
</comment>
<comment type="catalytic activity">
    <reaction evidence="2">
        <text>ATP-dependent cleavage of peptide bonds with broad specificity.</text>
        <dbReference type="EC" id="3.4.25.2"/>
    </reaction>
</comment>
<comment type="activity regulation">
    <text evidence="2">Allosterically activated by HslU binding.</text>
</comment>
<comment type="subunit">
    <text evidence="2">A double ring-shaped homohexamer of HslV is capped on each side by a ring-shaped HslU homohexamer. The assembly of the HslU/HslV complex is dependent on binding of ATP.</text>
</comment>
<comment type="subcellular location">
    <subcellularLocation>
        <location evidence="2">Cytoplasm</location>
    </subcellularLocation>
</comment>
<comment type="induction">
    <text evidence="2">By heat shock.</text>
</comment>
<comment type="similarity">
    <text evidence="2">Belongs to the peptidase T1B family. HslV subfamily.</text>
</comment>
<name>HSLV_SHIFL</name>
<keyword id="KW-0021">Allosteric enzyme</keyword>
<keyword id="KW-0963">Cytoplasm</keyword>
<keyword id="KW-0378">Hydrolase</keyword>
<keyword id="KW-0479">Metal-binding</keyword>
<keyword id="KW-0645">Protease</keyword>
<keyword id="KW-1185">Reference proteome</keyword>
<keyword id="KW-0915">Sodium</keyword>
<keyword id="KW-0346">Stress response</keyword>
<keyword id="KW-0888">Threonine protease</keyword>
<gene>
    <name evidence="2" type="primary">hslV</name>
    <name type="ordered locus">SF4010</name>
    <name type="ordered locus">S3737</name>
</gene>
<organism>
    <name type="scientific">Shigella flexneri</name>
    <dbReference type="NCBI Taxonomy" id="623"/>
    <lineage>
        <taxon>Bacteria</taxon>
        <taxon>Pseudomonadati</taxon>
        <taxon>Pseudomonadota</taxon>
        <taxon>Gammaproteobacteria</taxon>
        <taxon>Enterobacterales</taxon>
        <taxon>Enterobacteriaceae</taxon>
        <taxon>Shigella</taxon>
    </lineage>
</organism>
<reference key="1">
    <citation type="journal article" date="2002" name="Nucleic Acids Res.">
        <title>Genome sequence of Shigella flexneri 2a: insights into pathogenicity through comparison with genomes of Escherichia coli K12 and O157.</title>
        <authorList>
            <person name="Jin Q."/>
            <person name="Yuan Z."/>
            <person name="Xu J."/>
            <person name="Wang Y."/>
            <person name="Shen Y."/>
            <person name="Lu W."/>
            <person name="Wang J."/>
            <person name="Liu H."/>
            <person name="Yang J."/>
            <person name="Yang F."/>
            <person name="Zhang X."/>
            <person name="Zhang J."/>
            <person name="Yang G."/>
            <person name="Wu H."/>
            <person name="Qu D."/>
            <person name="Dong J."/>
            <person name="Sun L."/>
            <person name="Xue Y."/>
            <person name="Zhao A."/>
            <person name="Gao Y."/>
            <person name="Zhu J."/>
            <person name="Kan B."/>
            <person name="Ding K."/>
            <person name="Chen S."/>
            <person name="Cheng H."/>
            <person name="Yao Z."/>
            <person name="He B."/>
            <person name="Chen R."/>
            <person name="Ma D."/>
            <person name="Qiang B."/>
            <person name="Wen Y."/>
            <person name="Hou Y."/>
            <person name="Yu J."/>
        </authorList>
    </citation>
    <scope>NUCLEOTIDE SEQUENCE [LARGE SCALE GENOMIC DNA]</scope>
    <source>
        <strain>301 / Serotype 2a</strain>
    </source>
</reference>
<reference key="2">
    <citation type="journal article" date="2003" name="Infect. Immun.">
        <title>Complete genome sequence and comparative genomics of Shigella flexneri serotype 2a strain 2457T.</title>
        <authorList>
            <person name="Wei J."/>
            <person name="Goldberg M.B."/>
            <person name="Burland V."/>
            <person name="Venkatesan M.M."/>
            <person name="Deng W."/>
            <person name="Fournier G."/>
            <person name="Mayhew G.F."/>
            <person name="Plunkett G. III"/>
            <person name="Rose D.J."/>
            <person name="Darling A."/>
            <person name="Mau B."/>
            <person name="Perna N.T."/>
            <person name="Payne S.M."/>
            <person name="Runyen-Janecky L.J."/>
            <person name="Zhou S."/>
            <person name="Schwartz D.C."/>
            <person name="Blattner F.R."/>
        </authorList>
    </citation>
    <scope>NUCLEOTIDE SEQUENCE [LARGE SCALE GENOMIC DNA]</scope>
    <source>
        <strain>ATCC 700930 / 2457T / Serotype 2a</strain>
    </source>
</reference>
<feature type="initiator methionine" description="Removed" evidence="1">
    <location>
        <position position="1"/>
    </location>
</feature>
<feature type="chain" id="PRO_0000148145" description="ATP-dependent protease subunit HslV">
    <location>
        <begin position="2"/>
        <end position="176"/>
    </location>
</feature>
<feature type="active site" evidence="2">
    <location>
        <position position="2"/>
    </location>
</feature>
<feature type="binding site" evidence="2">
    <location>
        <position position="157"/>
    </location>
    <ligand>
        <name>Na(+)</name>
        <dbReference type="ChEBI" id="CHEBI:29101"/>
    </ligand>
</feature>
<feature type="binding site" evidence="2">
    <location>
        <position position="160"/>
    </location>
    <ligand>
        <name>Na(+)</name>
        <dbReference type="ChEBI" id="CHEBI:29101"/>
    </ligand>
</feature>
<feature type="binding site" evidence="2">
    <location>
        <position position="163"/>
    </location>
    <ligand>
        <name>Na(+)</name>
        <dbReference type="ChEBI" id="CHEBI:29101"/>
    </ligand>
</feature>
<sequence>MTTIVSVRRNGHVVIAGDGQATLGNTVMKGNVKKVRRLYNDKVIAGFAGGTADAFTLFELFERKLEMHQGHLVKAAVELAKDWRTDRMLRKLEALLAVADETASLIITGNGDVVQPENDLIAIGSGGPYAQAAARALLENTELSAREIAEKALDIAGDICIYTNHFHTIEELSYKA</sequence>
<accession>P0A7C1</accession>
<accession>P31059</accession>
<accession>P97542</accession>